<accession>Q821Q5</accession>
<keyword id="KW-0004">4Fe-4S</keyword>
<keyword id="KW-0408">Iron</keyword>
<keyword id="KW-0411">Iron-sulfur</keyword>
<keyword id="KW-0479">Metal-binding</keyword>
<keyword id="KW-0489">Methyltransferase</keyword>
<keyword id="KW-0949">S-adenosyl-L-methionine</keyword>
<keyword id="KW-0808">Transferase</keyword>
<evidence type="ECO:0000250" key="1"/>
<evidence type="ECO:0000255" key="2">
    <source>
        <dbReference type="PROSITE-ProRule" id="PRU01024"/>
    </source>
</evidence>
<name>Y883_CHLCV</name>
<sequence length="401" mass="45226">MPTIMNCKHLGICGGCSSPQSAYADSLKAKEQILHELFAPIFPPSEILPVIPCDPVLRGRNKMEFSFFQTKEGKKSLGFITPTKPKQGVPITECLMIHEDTMDILNLTRAWWDNHPELTAYYPPFNKGSLCTLTVRIGSPERKLMVILTTSAREEYAVEKGIIEEWKNALINSSLPIVSIIWEEKVSAKNAPTYFRSHLIHGEPFIKQTLTLPKDGNSGVFHVRPRSFFQPQSLQGAKIIEIAKEFMNPQGSETLLDLYCGAGTIGIMLSAYVKKVIGVEIVPDAIDSAKENILINKKENLIEVYLEDAKTFCRRHQDCPPPDVVVIDPPRCGIQNKVLKYLLRIFPKKIIYISCNPKIQFEECCSLISAGYHIKKVQPLDQFPHSPHLENIILLEREDSL</sequence>
<gene>
    <name type="ordered locus">CCA_00883</name>
</gene>
<reference key="1">
    <citation type="journal article" date="2003" name="Nucleic Acids Res.">
        <title>Genome sequence of Chlamydophila caviae (Chlamydia psittaci GPIC): examining the role of niche-specific genes in the evolution of the Chlamydiaceae.</title>
        <authorList>
            <person name="Read T.D."/>
            <person name="Myers G.S.A."/>
            <person name="Brunham R.C."/>
            <person name="Nelson W.C."/>
            <person name="Paulsen I.T."/>
            <person name="Heidelberg J.F."/>
            <person name="Holtzapple E.K."/>
            <person name="Khouri H.M."/>
            <person name="Federova N.B."/>
            <person name="Carty H.A."/>
            <person name="Umayam L.A."/>
            <person name="Haft D.H."/>
            <person name="Peterson J.D."/>
            <person name="Beanan M.J."/>
            <person name="White O."/>
            <person name="Salzberg S.L."/>
            <person name="Hsia R.-C."/>
            <person name="McClarty G."/>
            <person name="Rank R.G."/>
            <person name="Bavoil P.M."/>
            <person name="Fraser C.M."/>
        </authorList>
    </citation>
    <scope>NUCLEOTIDE SEQUENCE [LARGE SCALE GENOMIC DNA]</scope>
    <source>
        <strain>ATCC VR-813 / DSM 19441 / 03DC25 / GPIC</strain>
    </source>
</reference>
<dbReference type="EC" id="2.1.1.-"/>
<dbReference type="EMBL" id="AE015925">
    <property type="protein sequence ID" value="AAP05624.1"/>
    <property type="molecule type" value="Genomic_DNA"/>
</dbReference>
<dbReference type="RefSeq" id="WP_011006838.1">
    <property type="nucleotide sequence ID" value="NC_003361.3"/>
</dbReference>
<dbReference type="SMR" id="Q821Q5"/>
<dbReference type="STRING" id="227941.CCA_00883"/>
<dbReference type="KEGG" id="cca:CCA_00883"/>
<dbReference type="eggNOG" id="COG2265">
    <property type="taxonomic scope" value="Bacteria"/>
</dbReference>
<dbReference type="HOGENOM" id="CLU_014689_7_2_0"/>
<dbReference type="OrthoDB" id="9804590at2"/>
<dbReference type="Proteomes" id="UP000002193">
    <property type="component" value="Chromosome"/>
</dbReference>
<dbReference type="GO" id="GO:0051539">
    <property type="term" value="F:4 iron, 4 sulfur cluster binding"/>
    <property type="evidence" value="ECO:0007669"/>
    <property type="project" value="UniProtKB-KW"/>
</dbReference>
<dbReference type="GO" id="GO:0046872">
    <property type="term" value="F:metal ion binding"/>
    <property type="evidence" value="ECO:0007669"/>
    <property type="project" value="UniProtKB-KW"/>
</dbReference>
<dbReference type="GO" id="GO:0070041">
    <property type="term" value="F:rRNA (uridine-C5-)-methyltransferase activity"/>
    <property type="evidence" value="ECO:0007669"/>
    <property type="project" value="TreeGrafter"/>
</dbReference>
<dbReference type="GO" id="GO:0070475">
    <property type="term" value="P:rRNA base methylation"/>
    <property type="evidence" value="ECO:0007669"/>
    <property type="project" value="TreeGrafter"/>
</dbReference>
<dbReference type="CDD" id="cd02440">
    <property type="entry name" value="AdoMet_MTases"/>
    <property type="match status" value="1"/>
</dbReference>
<dbReference type="Gene3D" id="2.40.50.1070">
    <property type="match status" value="1"/>
</dbReference>
<dbReference type="Gene3D" id="3.40.50.150">
    <property type="entry name" value="Vaccinia Virus protein VP39"/>
    <property type="match status" value="1"/>
</dbReference>
<dbReference type="InterPro" id="IPR030390">
    <property type="entry name" value="MeTrfase_TrmA_AS"/>
</dbReference>
<dbReference type="InterPro" id="IPR030391">
    <property type="entry name" value="MeTrfase_TrmA_CS"/>
</dbReference>
<dbReference type="InterPro" id="IPR029063">
    <property type="entry name" value="SAM-dependent_MTases_sf"/>
</dbReference>
<dbReference type="InterPro" id="IPR010280">
    <property type="entry name" value="U5_MeTrfase_fam"/>
</dbReference>
<dbReference type="NCBIfam" id="TIGR00479">
    <property type="entry name" value="rumA"/>
    <property type="match status" value="1"/>
</dbReference>
<dbReference type="PANTHER" id="PTHR11061">
    <property type="entry name" value="RNA M5U METHYLTRANSFERASE"/>
    <property type="match status" value="1"/>
</dbReference>
<dbReference type="PANTHER" id="PTHR11061:SF30">
    <property type="entry name" value="TRNA (URACIL(54)-C(5))-METHYLTRANSFERASE"/>
    <property type="match status" value="1"/>
</dbReference>
<dbReference type="Pfam" id="PF05958">
    <property type="entry name" value="tRNA_U5-meth_tr"/>
    <property type="match status" value="1"/>
</dbReference>
<dbReference type="SUPFAM" id="SSF53335">
    <property type="entry name" value="S-adenosyl-L-methionine-dependent methyltransferases"/>
    <property type="match status" value="1"/>
</dbReference>
<dbReference type="PROSITE" id="PS51687">
    <property type="entry name" value="SAM_MT_RNA_M5U"/>
    <property type="match status" value="1"/>
</dbReference>
<dbReference type="PROSITE" id="PS01230">
    <property type="entry name" value="TRMA_1"/>
    <property type="match status" value="1"/>
</dbReference>
<dbReference type="PROSITE" id="PS01231">
    <property type="entry name" value="TRMA_2"/>
    <property type="match status" value="1"/>
</dbReference>
<comment type="similarity">
    <text evidence="2">Belongs to the class I-like SAM-binding methyltransferase superfamily. RNA M5U methyltransferase family.</text>
</comment>
<organism>
    <name type="scientific">Chlamydia caviae (strain ATCC VR-813 / DSM 19441 / 03DC25 / GPIC)</name>
    <name type="common">Chlamydophila caviae</name>
    <dbReference type="NCBI Taxonomy" id="227941"/>
    <lineage>
        <taxon>Bacteria</taxon>
        <taxon>Pseudomonadati</taxon>
        <taxon>Chlamydiota</taxon>
        <taxon>Chlamydiia</taxon>
        <taxon>Chlamydiales</taxon>
        <taxon>Chlamydiaceae</taxon>
        <taxon>Chlamydia/Chlamydophila group</taxon>
        <taxon>Chlamydia</taxon>
    </lineage>
</organism>
<feature type="chain" id="PRO_0000161963" description="Uncharacterized RNA methyltransferase CCA_00883">
    <location>
        <begin position="1"/>
        <end position="401"/>
    </location>
</feature>
<feature type="active site" description="Nucleophile" evidence="2">
    <location>
        <position position="355"/>
    </location>
</feature>
<feature type="binding site" evidence="1">
    <location>
        <position position="7"/>
    </location>
    <ligand>
        <name>[4Fe-4S] cluster</name>
        <dbReference type="ChEBI" id="CHEBI:49883"/>
    </ligand>
</feature>
<feature type="binding site" evidence="1">
    <location>
        <position position="13"/>
    </location>
    <ligand>
        <name>[4Fe-4S] cluster</name>
        <dbReference type="ChEBI" id="CHEBI:49883"/>
    </ligand>
</feature>
<feature type="binding site" evidence="1">
    <location>
        <position position="16"/>
    </location>
    <ligand>
        <name>[4Fe-4S] cluster</name>
        <dbReference type="ChEBI" id="CHEBI:49883"/>
    </ligand>
</feature>
<feature type="binding site" evidence="1">
    <location>
        <position position="94"/>
    </location>
    <ligand>
        <name>[4Fe-4S] cluster</name>
        <dbReference type="ChEBI" id="CHEBI:49883"/>
    </ligand>
</feature>
<feature type="binding site" evidence="2">
    <location>
        <position position="230"/>
    </location>
    <ligand>
        <name>S-adenosyl-L-methionine</name>
        <dbReference type="ChEBI" id="CHEBI:59789"/>
    </ligand>
</feature>
<feature type="binding site" evidence="2">
    <location>
        <position position="259"/>
    </location>
    <ligand>
        <name>S-adenosyl-L-methionine</name>
        <dbReference type="ChEBI" id="CHEBI:59789"/>
    </ligand>
</feature>
<feature type="binding site" evidence="2">
    <location>
        <position position="280"/>
    </location>
    <ligand>
        <name>S-adenosyl-L-methionine</name>
        <dbReference type="ChEBI" id="CHEBI:59789"/>
    </ligand>
</feature>
<feature type="binding site" evidence="2">
    <location>
        <position position="328"/>
    </location>
    <ligand>
        <name>S-adenosyl-L-methionine</name>
        <dbReference type="ChEBI" id="CHEBI:59789"/>
    </ligand>
</feature>
<proteinExistence type="inferred from homology"/>
<protein>
    <recommendedName>
        <fullName>Uncharacterized RNA methyltransferase CCA_00883</fullName>
        <ecNumber>2.1.1.-</ecNumber>
    </recommendedName>
</protein>